<gene>
    <name evidence="1" type="primary">mdcG</name>
    <name type="ordered locus">XAC0564</name>
</gene>
<accession>Q8PPW9</accession>
<keyword id="KW-0548">Nucleotidyltransferase</keyword>
<keyword id="KW-0808">Transferase</keyword>
<evidence type="ECO:0000255" key="1">
    <source>
        <dbReference type="HAMAP-Rule" id="MF_00650"/>
    </source>
</evidence>
<comment type="function">
    <text evidence="1">Transfers 2'-(5-triphosphoribosyl)-3'-dephosphocoenzyme-A to the apo-[acyl-carrier-protein] of the malonate decarboxylase to yield holo-[acyl-carrier-protein].</text>
</comment>
<comment type="catalytic activity">
    <reaction evidence="1">
        <text>apo-[malonate decarboxylase ACP] + 2'-(5''-triphospho-alpha-D-ribosyl)-3'-dephospho-CoA = holo-[malonate decarboxylase ACP] + diphosphate</text>
        <dbReference type="Rhea" id="RHEA:42644"/>
        <dbReference type="Rhea" id="RHEA-COMP:10160"/>
        <dbReference type="Rhea" id="RHEA-COMP:10161"/>
        <dbReference type="ChEBI" id="CHEBI:29999"/>
        <dbReference type="ChEBI" id="CHEBI:33019"/>
        <dbReference type="ChEBI" id="CHEBI:61378"/>
        <dbReference type="ChEBI" id="CHEBI:82683"/>
        <dbReference type="EC" id="2.7.7.66"/>
    </reaction>
</comment>
<comment type="similarity">
    <text evidence="1">Belongs to the MdcG family.</text>
</comment>
<name>MDCG_XANAC</name>
<proteinExistence type="inferred from homology"/>
<organism>
    <name type="scientific">Xanthomonas axonopodis pv. citri (strain 306)</name>
    <dbReference type="NCBI Taxonomy" id="190486"/>
    <lineage>
        <taxon>Bacteria</taxon>
        <taxon>Pseudomonadati</taxon>
        <taxon>Pseudomonadota</taxon>
        <taxon>Gammaproteobacteria</taxon>
        <taxon>Lysobacterales</taxon>
        <taxon>Lysobacteraceae</taxon>
        <taxon>Xanthomonas</taxon>
    </lineage>
</organism>
<reference key="1">
    <citation type="journal article" date="2002" name="Nature">
        <title>Comparison of the genomes of two Xanthomonas pathogens with differing host specificities.</title>
        <authorList>
            <person name="da Silva A.C.R."/>
            <person name="Ferro J.A."/>
            <person name="Reinach F.C."/>
            <person name="Farah C.S."/>
            <person name="Furlan L.R."/>
            <person name="Quaggio R.B."/>
            <person name="Monteiro-Vitorello C.B."/>
            <person name="Van Sluys M.A."/>
            <person name="Almeida N.F. Jr."/>
            <person name="Alves L.M.C."/>
            <person name="do Amaral A.M."/>
            <person name="Bertolini M.C."/>
            <person name="Camargo L.E.A."/>
            <person name="Camarotte G."/>
            <person name="Cannavan F."/>
            <person name="Cardozo J."/>
            <person name="Chambergo F."/>
            <person name="Ciapina L.P."/>
            <person name="Cicarelli R.M.B."/>
            <person name="Coutinho L.L."/>
            <person name="Cursino-Santos J.R."/>
            <person name="El-Dorry H."/>
            <person name="Faria J.B."/>
            <person name="Ferreira A.J.S."/>
            <person name="Ferreira R.C.C."/>
            <person name="Ferro M.I.T."/>
            <person name="Formighieri E.F."/>
            <person name="Franco M.C."/>
            <person name="Greggio C.C."/>
            <person name="Gruber A."/>
            <person name="Katsuyama A.M."/>
            <person name="Kishi L.T."/>
            <person name="Leite R.P."/>
            <person name="Lemos E.G.M."/>
            <person name="Lemos M.V.F."/>
            <person name="Locali E.C."/>
            <person name="Machado M.A."/>
            <person name="Madeira A.M.B.N."/>
            <person name="Martinez-Rossi N.M."/>
            <person name="Martins E.C."/>
            <person name="Meidanis J."/>
            <person name="Menck C.F.M."/>
            <person name="Miyaki C.Y."/>
            <person name="Moon D.H."/>
            <person name="Moreira L.M."/>
            <person name="Novo M.T.M."/>
            <person name="Okura V.K."/>
            <person name="Oliveira M.C."/>
            <person name="Oliveira V.R."/>
            <person name="Pereira H.A."/>
            <person name="Rossi A."/>
            <person name="Sena J.A.D."/>
            <person name="Silva C."/>
            <person name="de Souza R.F."/>
            <person name="Spinola L.A.F."/>
            <person name="Takita M.A."/>
            <person name="Tamura R.E."/>
            <person name="Teixeira E.C."/>
            <person name="Tezza R.I.D."/>
            <person name="Trindade dos Santos M."/>
            <person name="Truffi D."/>
            <person name="Tsai S.M."/>
            <person name="White F.F."/>
            <person name="Setubal J.C."/>
            <person name="Kitajima J.P."/>
        </authorList>
    </citation>
    <scope>NUCLEOTIDE SEQUENCE [LARGE SCALE GENOMIC DNA]</scope>
    <source>
        <strain>306</strain>
    </source>
</reference>
<protein>
    <recommendedName>
        <fullName evidence="1">Phosphoribosyl-dephospho-CoA transferase</fullName>
        <ecNumber evidence="1">2.7.7.66</ecNumber>
    </recommendedName>
    <alternativeName>
        <fullName evidence="1">Malonate decarboxylase holo-[acyl-carrier-protein] synthase</fullName>
        <shortName evidence="1">Holo-ACP synthase</shortName>
    </alternativeName>
</protein>
<dbReference type="EC" id="2.7.7.66" evidence="1"/>
<dbReference type="EMBL" id="AE008923">
    <property type="protein sequence ID" value="AAM35453.1"/>
    <property type="molecule type" value="Genomic_DNA"/>
</dbReference>
<dbReference type="RefSeq" id="WP_011050390.1">
    <property type="nucleotide sequence ID" value="NC_003919.1"/>
</dbReference>
<dbReference type="GeneID" id="66909767"/>
<dbReference type="KEGG" id="xac:XAC0564"/>
<dbReference type="eggNOG" id="ENOG503268I">
    <property type="taxonomic scope" value="Bacteria"/>
</dbReference>
<dbReference type="HOGENOM" id="CLU_075747_0_1_6"/>
<dbReference type="Proteomes" id="UP000000576">
    <property type="component" value="Chromosome"/>
</dbReference>
<dbReference type="GO" id="GO:0016779">
    <property type="term" value="F:nucleotidyltransferase activity"/>
    <property type="evidence" value="ECO:0007669"/>
    <property type="project" value="UniProtKB-UniRule"/>
</dbReference>
<dbReference type="HAMAP" id="MF_00650">
    <property type="entry name" value="Malonate_MdcG"/>
    <property type="match status" value="1"/>
</dbReference>
<dbReference type="InterPro" id="IPR017557">
    <property type="entry name" value="Holo-ACP_synthase"/>
</dbReference>
<dbReference type="InterPro" id="IPR049180">
    <property type="entry name" value="MdcG_C"/>
</dbReference>
<dbReference type="InterPro" id="IPR048903">
    <property type="entry name" value="MdcG_N"/>
</dbReference>
<dbReference type="NCBIfam" id="TIGR03135">
    <property type="entry name" value="malonate_mdcG"/>
    <property type="match status" value="1"/>
</dbReference>
<dbReference type="Pfam" id="PF10620">
    <property type="entry name" value="MdcG"/>
    <property type="match status" value="1"/>
</dbReference>
<dbReference type="Pfam" id="PF20866">
    <property type="entry name" value="MdcG_N"/>
    <property type="match status" value="1"/>
</dbReference>
<sequence length="213" mass="23013">MAGRHALVWLREDAQWQAVTSGAQPRLQQWFAAGLPAVVARGDGSQAPGTLRLGVPLPPSEGKQRLALQAHVAGIARCTAPLTLDAVMPHAPLAVQPALQALLAQAHAHALHPHVFGSFAWQALTGLTYVHAQSDLDLLWSIQTPEQACAVLTLVQRWEQQHGLRADGELRLPDDNAVNWREYAGNAQQVLVKSNQDCRLLPRAALFPARSAA</sequence>
<feature type="chain" id="PRO_0000220297" description="Phosphoribosyl-dephospho-CoA transferase">
    <location>
        <begin position="1"/>
        <end position="213"/>
    </location>
</feature>
<feature type="active site" evidence="1">
    <location>
        <position position="135"/>
    </location>
</feature>
<feature type="active site" evidence="1">
    <location>
        <position position="137"/>
    </location>
</feature>